<accession>B1KKZ2</accession>
<protein>
    <recommendedName>
        <fullName evidence="1">3-isopropylmalate dehydratase large subunit</fullName>
        <ecNumber evidence="1">4.2.1.33</ecNumber>
    </recommendedName>
    <alternativeName>
        <fullName evidence="1">Alpha-IPM isomerase</fullName>
        <shortName evidence="1">IPMI</shortName>
    </alternativeName>
    <alternativeName>
        <fullName evidence="1">Isopropylmalate isomerase</fullName>
    </alternativeName>
</protein>
<organism>
    <name type="scientific">Shewanella woodyi (strain ATCC 51908 / MS32)</name>
    <dbReference type="NCBI Taxonomy" id="392500"/>
    <lineage>
        <taxon>Bacteria</taxon>
        <taxon>Pseudomonadati</taxon>
        <taxon>Pseudomonadota</taxon>
        <taxon>Gammaproteobacteria</taxon>
        <taxon>Alteromonadales</taxon>
        <taxon>Shewanellaceae</taxon>
        <taxon>Shewanella</taxon>
    </lineage>
</organism>
<reference key="1">
    <citation type="submission" date="2008-02" db="EMBL/GenBank/DDBJ databases">
        <title>Complete sequence of Shewanella woodyi ATCC 51908.</title>
        <authorList>
            <consortium name="US DOE Joint Genome Institute"/>
            <person name="Copeland A."/>
            <person name="Lucas S."/>
            <person name="Lapidus A."/>
            <person name="Glavina del Rio T."/>
            <person name="Dalin E."/>
            <person name="Tice H."/>
            <person name="Bruce D."/>
            <person name="Goodwin L."/>
            <person name="Pitluck S."/>
            <person name="Sims D."/>
            <person name="Brettin T."/>
            <person name="Detter J.C."/>
            <person name="Han C."/>
            <person name="Kuske C.R."/>
            <person name="Schmutz J."/>
            <person name="Larimer F."/>
            <person name="Land M."/>
            <person name="Hauser L."/>
            <person name="Kyrpides N."/>
            <person name="Lykidis A."/>
            <person name="Zhao J.-S."/>
            <person name="Richardson P."/>
        </authorList>
    </citation>
    <scope>NUCLEOTIDE SEQUENCE [LARGE SCALE GENOMIC DNA]</scope>
    <source>
        <strain>ATCC 51908 / MS32</strain>
    </source>
</reference>
<evidence type="ECO:0000255" key="1">
    <source>
        <dbReference type="HAMAP-Rule" id="MF_01026"/>
    </source>
</evidence>
<sequence length="466" mass="49707">MAKTLYEKVWDSHVVVANEGEAPLIYVDRHLVHEVTSPQAFSGLKVAGRRLRAPEKTFATMDHNTSTKSASLDALSPMARIQVETLQDNCKEFGIKLYDIHHKNQGIVHVMGPELGITLPGTVIVCGDSHTATHGAFGALAFGIGTSEVEHVMATQTLRQNKAKTMKIEVKGHVTPGITAKDIVLAIIGKIGMDGGTGYVVEFCGEAIEALSMEGRMTVCNMAIEMGAKAGMIAPDATTAEYLKGREFAPKAESWEQAIEAWSELKTDADAVFDSTVILEAADIAPQLTWGTNPGQVVAIDGVVPNPQDEPNATVKASIEKALEYVALSAGTSMKDVSINKVFIGSCTNSRIEDLRDAALHAKGKHVAEGVTAIVVPGSGLVKEQAEAEGLDKIFIEAGFEWRLPGCSMCLAMNDDRLEAGDRCASTSNRNFEGRQGRGSRTHLVSPAMAAAAAVAGHFVDIRQTL</sequence>
<keyword id="KW-0004">4Fe-4S</keyword>
<keyword id="KW-0028">Amino-acid biosynthesis</keyword>
<keyword id="KW-0100">Branched-chain amino acid biosynthesis</keyword>
<keyword id="KW-0408">Iron</keyword>
<keyword id="KW-0411">Iron-sulfur</keyword>
<keyword id="KW-0432">Leucine biosynthesis</keyword>
<keyword id="KW-0456">Lyase</keyword>
<keyword id="KW-0479">Metal-binding</keyword>
<keyword id="KW-1185">Reference proteome</keyword>
<proteinExistence type="inferred from homology"/>
<comment type="function">
    <text evidence="1">Catalyzes the isomerization between 2-isopropylmalate and 3-isopropylmalate, via the formation of 2-isopropylmaleate.</text>
</comment>
<comment type="catalytic activity">
    <reaction evidence="1">
        <text>(2R,3S)-3-isopropylmalate = (2S)-2-isopropylmalate</text>
        <dbReference type="Rhea" id="RHEA:32287"/>
        <dbReference type="ChEBI" id="CHEBI:1178"/>
        <dbReference type="ChEBI" id="CHEBI:35121"/>
        <dbReference type="EC" id="4.2.1.33"/>
    </reaction>
</comment>
<comment type="cofactor">
    <cofactor evidence="1">
        <name>[4Fe-4S] cluster</name>
        <dbReference type="ChEBI" id="CHEBI:49883"/>
    </cofactor>
    <text evidence="1">Binds 1 [4Fe-4S] cluster per subunit.</text>
</comment>
<comment type="pathway">
    <text evidence="1">Amino-acid biosynthesis; L-leucine biosynthesis; L-leucine from 3-methyl-2-oxobutanoate: step 2/4.</text>
</comment>
<comment type="subunit">
    <text evidence="1">Heterodimer of LeuC and LeuD.</text>
</comment>
<comment type="similarity">
    <text evidence="1">Belongs to the aconitase/IPM isomerase family. LeuC type 1 subfamily.</text>
</comment>
<dbReference type="EC" id="4.2.1.33" evidence="1"/>
<dbReference type="EMBL" id="CP000961">
    <property type="protein sequence ID" value="ACA88798.1"/>
    <property type="molecule type" value="Genomic_DNA"/>
</dbReference>
<dbReference type="RefSeq" id="WP_012327124.1">
    <property type="nucleotide sequence ID" value="NC_010506.1"/>
</dbReference>
<dbReference type="SMR" id="B1KKZ2"/>
<dbReference type="STRING" id="392500.Swoo_4548"/>
<dbReference type="KEGG" id="swd:Swoo_4548"/>
<dbReference type="eggNOG" id="COG0065">
    <property type="taxonomic scope" value="Bacteria"/>
</dbReference>
<dbReference type="HOGENOM" id="CLU_006714_3_4_6"/>
<dbReference type="UniPathway" id="UPA00048">
    <property type="reaction ID" value="UER00071"/>
</dbReference>
<dbReference type="Proteomes" id="UP000002168">
    <property type="component" value="Chromosome"/>
</dbReference>
<dbReference type="GO" id="GO:0003861">
    <property type="term" value="F:3-isopropylmalate dehydratase activity"/>
    <property type="evidence" value="ECO:0007669"/>
    <property type="project" value="UniProtKB-UniRule"/>
</dbReference>
<dbReference type="GO" id="GO:0051539">
    <property type="term" value="F:4 iron, 4 sulfur cluster binding"/>
    <property type="evidence" value="ECO:0007669"/>
    <property type="project" value="UniProtKB-KW"/>
</dbReference>
<dbReference type="GO" id="GO:0046872">
    <property type="term" value="F:metal ion binding"/>
    <property type="evidence" value="ECO:0007669"/>
    <property type="project" value="UniProtKB-KW"/>
</dbReference>
<dbReference type="GO" id="GO:0009098">
    <property type="term" value="P:L-leucine biosynthetic process"/>
    <property type="evidence" value="ECO:0007669"/>
    <property type="project" value="UniProtKB-UniRule"/>
</dbReference>
<dbReference type="CDD" id="cd01583">
    <property type="entry name" value="IPMI"/>
    <property type="match status" value="1"/>
</dbReference>
<dbReference type="FunFam" id="3.30.499.10:FF:000006">
    <property type="entry name" value="3-isopropylmalate dehydratase large subunit"/>
    <property type="match status" value="1"/>
</dbReference>
<dbReference type="FunFam" id="3.30.499.10:FF:000007">
    <property type="entry name" value="3-isopropylmalate dehydratase large subunit"/>
    <property type="match status" value="1"/>
</dbReference>
<dbReference type="Gene3D" id="3.30.499.10">
    <property type="entry name" value="Aconitase, domain 3"/>
    <property type="match status" value="2"/>
</dbReference>
<dbReference type="HAMAP" id="MF_01026">
    <property type="entry name" value="LeuC_type1"/>
    <property type="match status" value="1"/>
</dbReference>
<dbReference type="InterPro" id="IPR004430">
    <property type="entry name" value="3-IsopropMal_deHydase_lsu"/>
</dbReference>
<dbReference type="InterPro" id="IPR015931">
    <property type="entry name" value="Acnase/IPM_dHydase_lsu_aba_1/3"/>
</dbReference>
<dbReference type="InterPro" id="IPR001030">
    <property type="entry name" value="Acoase/IPM_deHydtase_lsu_aba"/>
</dbReference>
<dbReference type="InterPro" id="IPR018136">
    <property type="entry name" value="Aconitase_4Fe-4S_BS"/>
</dbReference>
<dbReference type="InterPro" id="IPR036008">
    <property type="entry name" value="Aconitase_4Fe-4S_dom"/>
</dbReference>
<dbReference type="InterPro" id="IPR050067">
    <property type="entry name" value="IPM_dehydratase_rel_enz"/>
</dbReference>
<dbReference type="InterPro" id="IPR033941">
    <property type="entry name" value="IPMI_cat"/>
</dbReference>
<dbReference type="NCBIfam" id="TIGR00170">
    <property type="entry name" value="leuC"/>
    <property type="match status" value="1"/>
</dbReference>
<dbReference type="NCBIfam" id="NF004016">
    <property type="entry name" value="PRK05478.1"/>
    <property type="match status" value="1"/>
</dbReference>
<dbReference type="NCBIfam" id="NF009116">
    <property type="entry name" value="PRK12466.1"/>
    <property type="match status" value="1"/>
</dbReference>
<dbReference type="PANTHER" id="PTHR43822:SF9">
    <property type="entry name" value="3-ISOPROPYLMALATE DEHYDRATASE"/>
    <property type="match status" value="1"/>
</dbReference>
<dbReference type="PANTHER" id="PTHR43822">
    <property type="entry name" value="HOMOACONITASE, MITOCHONDRIAL-RELATED"/>
    <property type="match status" value="1"/>
</dbReference>
<dbReference type="Pfam" id="PF00330">
    <property type="entry name" value="Aconitase"/>
    <property type="match status" value="1"/>
</dbReference>
<dbReference type="PRINTS" id="PR00415">
    <property type="entry name" value="ACONITASE"/>
</dbReference>
<dbReference type="SUPFAM" id="SSF53732">
    <property type="entry name" value="Aconitase iron-sulfur domain"/>
    <property type="match status" value="1"/>
</dbReference>
<dbReference type="PROSITE" id="PS00450">
    <property type="entry name" value="ACONITASE_1"/>
    <property type="match status" value="1"/>
</dbReference>
<dbReference type="PROSITE" id="PS01244">
    <property type="entry name" value="ACONITASE_2"/>
    <property type="match status" value="1"/>
</dbReference>
<gene>
    <name evidence="1" type="primary">leuC</name>
    <name type="ordered locus">Swoo_4548</name>
</gene>
<feature type="chain" id="PRO_1000135715" description="3-isopropylmalate dehydratase large subunit">
    <location>
        <begin position="1"/>
        <end position="466"/>
    </location>
</feature>
<feature type="binding site" evidence="1">
    <location>
        <position position="347"/>
    </location>
    <ligand>
        <name>[4Fe-4S] cluster</name>
        <dbReference type="ChEBI" id="CHEBI:49883"/>
    </ligand>
</feature>
<feature type="binding site" evidence="1">
    <location>
        <position position="407"/>
    </location>
    <ligand>
        <name>[4Fe-4S] cluster</name>
        <dbReference type="ChEBI" id="CHEBI:49883"/>
    </ligand>
</feature>
<feature type="binding site" evidence="1">
    <location>
        <position position="410"/>
    </location>
    <ligand>
        <name>[4Fe-4S] cluster</name>
        <dbReference type="ChEBI" id="CHEBI:49883"/>
    </ligand>
</feature>
<name>LEUC_SHEWM</name>